<name>PXPA_COPPD</name>
<gene>
    <name evidence="1" type="primary">pxpA</name>
    <name type="ordered locus">COPRO5265_1531</name>
</gene>
<reference key="1">
    <citation type="submission" date="2008-08" db="EMBL/GenBank/DDBJ databases">
        <title>The complete genome sequence of Coprothermobacter proteolyticus strain ATCC 5245 / DSM 5265 / BT.</title>
        <authorList>
            <person name="Dodson R.J."/>
            <person name="Durkin A.S."/>
            <person name="Wu M."/>
            <person name="Eisen J."/>
            <person name="Sutton G."/>
        </authorList>
    </citation>
    <scope>NUCLEOTIDE SEQUENCE [LARGE SCALE GENOMIC DNA]</scope>
    <source>
        <strain>ATCC 35245 / DSM 5265 / OCM 4 / BT</strain>
    </source>
</reference>
<proteinExistence type="inferred from homology"/>
<organism>
    <name type="scientific">Coprothermobacter proteolyticus (strain ATCC 35245 / DSM 5265 / OCM 4 / BT)</name>
    <dbReference type="NCBI Taxonomy" id="309798"/>
    <lineage>
        <taxon>Bacteria</taxon>
        <taxon>Pseudomonadati</taxon>
        <taxon>Coprothermobacterota</taxon>
        <taxon>Coprothermobacteria</taxon>
        <taxon>Coprothermobacterales</taxon>
        <taxon>Coprothermobacteraceae</taxon>
        <taxon>Coprothermobacter</taxon>
    </lineage>
</organism>
<accession>B5Y6A9</accession>
<sequence>MPLKVDLNADMGESFGAYKLGLDRELLNLVTSANIACGFHAGDYMVMQKTVNMAASKNVAVGAHPGFPDLQGFGRRNMQLSPEEVRNLVIYQIGALQPFARAEGTELKHVKPHGALYNMAAVNYELAKAIAEAVKKTVPDAILLALANSEMVKAANDVGIRVTQEVFADRAYNEDGTLVPRSMPGAVIDDPLQATERALEMVLEGKVTAINGKEIPIVAHSICVHGDNPKAVELASSIRKQLEKAHVEVVELTYVLKAAYS</sequence>
<dbReference type="EC" id="3.5.2.9" evidence="1"/>
<dbReference type="EMBL" id="CP001145">
    <property type="protein sequence ID" value="ACI17033.1"/>
    <property type="molecule type" value="Genomic_DNA"/>
</dbReference>
<dbReference type="RefSeq" id="WP_012543685.1">
    <property type="nucleotide sequence ID" value="NC_011295.1"/>
</dbReference>
<dbReference type="SMR" id="B5Y6A9"/>
<dbReference type="STRING" id="309798.COPRO5265_1531"/>
<dbReference type="KEGG" id="cpo:COPRO5265_1531"/>
<dbReference type="eggNOG" id="COG1540">
    <property type="taxonomic scope" value="Bacteria"/>
</dbReference>
<dbReference type="HOGENOM" id="CLU_069535_0_0_9"/>
<dbReference type="OrthoDB" id="9773478at2"/>
<dbReference type="Proteomes" id="UP000001732">
    <property type="component" value="Chromosome"/>
</dbReference>
<dbReference type="GO" id="GO:0017168">
    <property type="term" value="F:5-oxoprolinase (ATP-hydrolyzing) activity"/>
    <property type="evidence" value="ECO:0007669"/>
    <property type="project" value="UniProtKB-UniRule"/>
</dbReference>
<dbReference type="GO" id="GO:0005524">
    <property type="term" value="F:ATP binding"/>
    <property type="evidence" value="ECO:0007669"/>
    <property type="project" value="UniProtKB-UniRule"/>
</dbReference>
<dbReference type="GO" id="GO:0005975">
    <property type="term" value="P:carbohydrate metabolic process"/>
    <property type="evidence" value="ECO:0007669"/>
    <property type="project" value="InterPro"/>
</dbReference>
<dbReference type="CDD" id="cd10787">
    <property type="entry name" value="LamB_YcsF_like"/>
    <property type="match status" value="1"/>
</dbReference>
<dbReference type="Gene3D" id="3.20.20.370">
    <property type="entry name" value="Glycoside hydrolase/deacetylase"/>
    <property type="match status" value="1"/>
</dbReference>
<dbReference type="HAMAP" id="MF_00691">
    <property type="entry name" value="PxpA"/>
    <property type="match status" value="1"/>
</dbReference>
<dbReference type="InterPro" id="IPR011330">
    <property type="entry name" value="Glyco_hydro/deAcase_b/a-brl"/>
</dbReference>
<dbReference type="InterPro" id="IPR005501">
    <property type="entry name" value="LamB/YcsF/PxpA-like"/>
</dbReference>
<dbReference type="NCBIfam" id="NF003814">
    <property type="entry name" value="PRK05406.1-3"/>
    <property type="match status" value="1"/>
</dbReference>
<dbReference type="NCBIfam" id="NF003816">
    <property type="entry name" value="PRK05406.1-5"/>
    <property type="match status" value="1"/>
</dbReference>
<dbReference type="PANTHER" id="PTHR30292:SF0">
    <property type="entry name" value="5-OXOPROLINASE SUBUNIT A"/>
    <property type="match status" value="1"/>
</dbReference>
<dbReference type="PANTHER" id="PTHR30292">
    <property type="entry name" value="UNCHARACTERIZED PROTEIN YBGL-RELATED"/>
    <property type="match status" value="1"/>
</dbReference>
<dbReference type="Pfam" id="PF03746">
    <property type="entry name" value="LamB_YcsF"/>
    <property type="match status" value="1"/>
</dbReference>
<dbReference type="SUPFAM" id="SSF88713">
    <property type="entry name" value="Glycoside hydrolase/deacetylase"/>
    <property type="match status" value="1"/>
</dbReference>
<feature type="chain" id="PRO_1000132047" description="5-oxoprolinase subunit A">
    <location>
        <begin position="1"/>
        <end position="261"/>
    </location>
</feature>
<evidence type="ECO:0000255" key="1">
    <source>
        <dbReference type="HAMAP-Rule" id="MF_00691"/>
    </source>
</evidence>
<comment type="function">
    <text evidence="1">Catalyzes the cleavage of 5-oxoproline to form L-glutamate coupled to the hydrolysis of ATP to ADP and inorganic phosphate.</text>
</comment>
<comment type="catalytic activity">
    <reaction evidence="1">
        <text>5-oxo-L-proline + ATP + 2 H2O = L-glutamate + ADP + phosphate + H(+)</text>
        <dbReference type="Rhea" id="RHEA:10348"/>
        <dbReference type="ChEBI" id="CHEBI:15377"/>
        <dbReference type="ChEBI" id="CHEBI:15378"/>
        <dbReference type="ChEBI" id="CHEBI:29985"/>
        <dbReference type="ChEBI" id="CHEBI:30616"/>
        <dbReference type="ChEBI" id="CHEBI:43474"/>
        <dbReference type="ChEBI" id="CHEBI:58402"/>
        <dbReference type="ChEBI" id="CHEBI:456216"/>
        <dbReference type="EC" id="3.5.2.9"/>
    </reaction>
</comment>
<comment type="subunit">
    <text evidence="1">Forms a complex composed of PxpA, PxpB and PxpC.</text>
</comment>
<comment type="similarity">
    <text evidence="1">Belongs to the LamB/PxpA family.</text>
</comment>
<protein>
    <recommendedName>
        <fullName evidence="1">5-oxoprolinase subunit A</fullName>
        <shortName evidence="1">5-OPase subunit A</shortName>
        <ecNumber evidence="1">3.5.2.9</ecNumber>
    </recommendedName>
    <alternativeName>
        <fullName evidence="1">5-oxoprolinase (ATP-hydrolyzing) subunit A</fullName>
    </alternativeName>
</protein>
<keyword id="KW-0067">ATP-binding</keyword>
<keyword id="KW-0378">Hydrolase</keyword>
<keyword id="KW-0547">Nucleotide-binding</keyword>
<keyword id="KW-1185">Reference proteome</keyword>